<protein>
    <recommendedName>
        <fullName>Transmembrane protein 33 homolog</fullName>
    </recommendedName>
</protein>
<reference key="1">
    <citation type="journal article" date="1998" name="Science">
        <title>Genome sequence of the nematode C. elegans: a platform for investigating biology.</title>
        <authorList>
            <consortium name="The C. elegans sequencing consortium"/>
        </authorList>
    </citation>
    <scope>NUCLEOTIDE SEQUENCE [LARGE SCALE GENOMIC DNA]</scope>
    <source>
        <strain>Bristol N2</strain>
    </source>
</reference>
<evidence type="ECO:0000255" key="1"/>
<evidence type="ECO:0000256" key="2">
    <source>
        <dbReference type="SAM" id="MobiDB-lite"/>
    </source>
</evidence>
<evidence type="ECO:0000305" key="3"/>
<evidence type="ECO:0000312" key="4">
    <source>
        <dbReference type="WormBase" id="Y37D8A.17a"/>
    </source>
</evidence>
<proteinExistence type="inferred from homology"/>
<organism>
    <name type="scientific">Caenorhabditis elegans</name>
    <dbReference type="NCBI Taxonomy" id="6239"/>
    <lineage>
        <taxon>Eukaryota</taxon>
        <taxon>Metazoa</taxon>
        <taxon>Ecdysozoa</taxon>
        <taxon>Nematoda</taxon>
        <taxon>Chromadorea</taxon>
        <taxon>Rhabditida</taxon>
        <taxon>Rhabditina</taxon>
        <taxon>Rhabditomorpha</taxon>
        <taxon>Rhabditoidea</taxon>
        <taxon>Rhabditidae</taxon>
        <taxon>Peloderinae</taxon>
        <taxon>Caenorhabditis</taxon>
    </lineage>
</organism>
<comment type="subcellular location">
    <subcellularLocation>
        <location evidence="3">Membrane</location>
        <topology evidence="3">Multi-pass membrane protein</topology>
    </subcellularLocation>
</comment>
<comment type="similarity">
    <text evidence="3">Belongs to the PER33/POM33 family.</text>
</comment>
<gene>
    <name evidence="4" type="primary">npp-25</name>
    <name evidence="4" type="ORF">Y37D8A.17</name>
</gene>
<dbReference type="EMBL" id="BX284603">
    <property type="protein sequence ID" value="CAA21541.1"/>
    <property type="molecule type" value="Genomic_DNA"/>
</dbReference>
<dbReference type="PIR" id="T26640">
    <property type="entry name" value="T26640"/>
</dbReference>
<dbReference type="RefSeq" id="NP_499684.1">
    <property type="nucleotide sequence ID" value="NM_067283.4"/>
</dbReference>
<dbReference type="SMR" id="Q9XWV0"/>
<dbReference type="BioGRID" id="54250">
    <property type="interactions" value="3"/>
</dbReference>
<dbReference type="DIP" id="DIP-25499N"/>
<dbReference type="FunCoup" id="Q9XWV0">
    <property type="interactions" value="3172"/>
</dbReference>
<dbReference type="IntAct" id="Q9XWV0">
    <property type="interactions" value="2"/>
</dbReference>
<dbReference type="STRING" id="6239.Y37D8A.17a.1"/>
<dbReference type="PaxDb" id="6239-Y37D8A.17"/>
<dbReference type="PeptideAtlas" id="Q9XWV0"/>
<dbReference type="EnsemblMetazoa" id="Y37D8A.17a.1">
    <property type="protein sequence ID" value="Y37D8A.17a.1"/>
    <property type="gene ID" value="WBGene00012555"/>
</dbReference>
<dbReference type="GeneID" id="189617"/>
<dbReference type="KEGG" id="cel:CELE_Y37D8A.17"/>
<dbReference type="UCSC" id="Y37D8A.17">
    <property type="organism name" value="c. elegans"/>
</dbReference>
<dbReference type="AGR" id="WB:WBGene00012555"/>
<dbReference type="CTD" id="189617"/>
<dbReference type="WormBase" id="Y37D8A.17a">
    <property type="protein sequence ID" value="CE20221"/>
    <property type="gene ID" value="WBGene00012555"/>
    <property type="gene designation" value="npp-25"/>
</dbReference>
<dbReference type="eggNOG" id="KOG4002">
    <property type="taxonomic scope" value="Eukaryota"/>
</dbReference>
<dbReference type="GeneTree" id="ENSGT00390000011368"/>
<dbReference type="HOGENOM" id="CLU_071391_0_0_1"/>
<dbReference type="InParanoid" id="Q9XWV0"/>
<dbReference type="OMA" id="FFSIRPT"/>
<dbReference type="OrthoDB" id="5581259at2759"/>
<dbReference type="PhylomeDB" id="Q9XWV0"/>
<dbReference type="PRO" id="PR:Q9XWV0"/>
<dbReference type="Proteomes" id="UP000001940">
    <property type="component" value="Chromosome III"/>
</dbReference>
<dbReference type="Bgee" id="WBGene00012555">
    <property type="expression patterns" value="Expressed in pharyngeal muscle cell (C elegans) and 3 other cell types or tissues"/>
</dbReference>
<dbReference type="ExpressionAtlas" id="Q9XWV0">
    <property type="expression patterns" value="baseline"/>
</dbReference>
<dbReference type="GO" id="GO:0005783">
    <property type="term" value="C:endoplasmic reticulum"/>
    <property type="evidence" value="ECO:0000318"/>
    <property type="project" value="GO_Central"/>
</dbReference>
<dbReference type="GO" id="GO:0016020">
    <property type="term" value="C:membrane"/>
    <property type="evidence" value="ECO:0007669"/>
    <property type="project" value="UniProtKB-SubCell"/>
</dbReference>
<dbReference type="GO" id="GO:0071786">
    <property type="term" value="P:endoplasmic reticulum tubular network organization"/>
    <property type="evidence" value="ECO:0000318"/>
    <property type="project" value="GO_Central"/>
</dbReference>
<dbReference type="GO" id="GO:0061024">
    <property type="term" value="P:membrane organization"/>
    <property type="evidence" value="ECO:0000318"/>
    <property type="project" value="GO_Central"/>
</dbReference>
<dbReference type="InterPro" id="IPR051645">
    <property type="entry name" value="PER33/POM33_regulator"/>
</dbReference>
<dbReference type="InterPro" id="IPR005344">
    <property type="entry name" value="TMEM33/Pom33"/>
</dbReference>
<dbReference type="PANTHER" id="PTHR12703">
    <property type="entry name" value="TRANSMEMBRANE PROTEIN 33"/>
    <property type="match status" value="1"/>
</dbReference>
<dbReference type="PANTHER" id="PTHR12703:SF4">
    <property type="entry name" value="TRANSMEMBRANE PROTEIN 33"/>
    <property type="match status" value="1"/>
</dbReference>
<dbReference type="Pfam" id="PF03661">
    <property type="entry name" value="TMEM33_Pom33"/>
    <property type="match status" value="1"/>
</dbReference>
<keyword id="KW-0472">Membrane</keyword>
<keyword id="KW-1185">Reference proteome</keyword>
<keyword id="KW-0812">Transmembrane</keyword>
<keyword id="KW-1133">Transmembrane helix</keyword>
<feature type="chain" id="PRO_0000220902" description="Transmembrane protein 33 homolog">
    <location>
        <begin position="1"/>
        <end position="271"/>
    </location>
</feature>
<feature type="transmembrane region" description="Helical" evidence="1">
    <location>
        <begin position="56"/>
        <end position="76"/>
    </location>
</feature>
<feature type="transmembrane region" description="Helical" evidence="1">
    <location>
        <begin position="125"/>
        <end position="145"/>
    </location>
</feature>
<feature type="transmembrane region" description="Helical" evidence="1">
    <location>
        <begin position="180"/>
        <end position="200"/>
    </location>
</feature>
<feature type="region of interest" description="Disordered" evidence="2">
    <location>
        <begin position="1"/>
        <end position="32"/>
    </location>
</feature>
<feature type="compositionally biased region" description="Low complexity" evidence="2">
    <location>
        <begin position="13"/>
        <end position="25"/>
    </location>
</feature>
<name>TMM33_CAEEL</name>
<accession>Q9XWV0</accession>
<sequence length="271" mass="29615">MVEIVEEPDDHQSSSTGAGSSGSSSAPPPPPPPAYSSISQYVSANTMECVLFAARVLTVFFALNYMIPFIGLVPAHSAYYKIFAASAATFALRLHTRIQGQFALNAQFIQRLIIEDSFHYLVYSVVFLMAAPVSMAALPVTIYAALHACTFMTKILRETGHTSSIIPKLEQFTAHQTQNALGIIACSEIFLVPLLVSLIFSGKGSLLLPFAYYRFLSLRYASRRNPSTRQAFAQMRGSLQNVAMSSSCPRPISSLIYRAIDFISARAPPVM</sequence>